<comment type="function">
    <text evidence="1 4">Probable UDP-glucose transmembrane transporter involved in UDP-glucose transport from the cytosol to the lumen of synaptic vesicles (PubMed:34269178). It is involved in platelet dense granules maturation (By similarity).</text>
</comment>
<comment type="function">
    <text evidence="1">Alternatively, could function as a molecular adapter enhancing the formation of the PI3KC3-C1/AIC/autophagy initiation complex to promote autophagy in dopaminergic neurons. Could also regulate the plasma membrane localization of the D(1A) dopamine receptor/DRD1 and dopamine signaling.</text>
</comment>
<comment type="catalytic activity">
    <reaction evidence="4">
        <text>UDP-alpha-D-glucose(in) = UDP-alpha-D-glucose(out)</text>
        <dbReference type="Rhea" id="RHEA:76195"/>
        <dbReference type="ChEBI" id="CHEBI:58885"/>
    </reaction>
</comment>
<comment type="activity regulation">
    <text evidence="4">Inhibited by proton uncouplers that directly abolish the proton electrochemical gradient.</text>
</comment>
<comment type="biophysicochemical properties">
    <kinetics>
        <KM evidence="4">0.87 uM for UDP-alpha-D-glucose</KM>
    </kinetics>
</comment>
<comment type="subunit">
    <text evidence="1">Could interact with ATG14, BECN1 and PIK3C3 that form the PI3KC3-C1/AIC/autophagy initiation complex; enhancing the formation of the AIC and promoting autophagy.</text>
</comment>
<comment type="interaction">
    <interactant intactId="EBI-21897396">
        <id>Q5M8T2</id>
    </interactant>
    <interactant intactId="EBI-7400460">
        <id>Q9NPB8</id>
        <label>GPCPD1</label>
    </interactant>
    <organismsDiffer>false</organismsDiffer>
    <experiments>2</experiments>
</comment>
<comment type="subcellular location">
    <subcellularLocation>
        <location evidence="4">Cytoplasmic vesicle</location>
        <location evidence="4">Secretory vesicle</location>
        <location evidence="4">Synaptic vesicle membrane</location>
        <topology evidence="2">Multi-pass membrane protein</topology>
    </subcellularLocation>
    <subcellularLocation>
        <location evidence="1">Early endosome membrane</location>
        <topology evidence="2">Multi-pass membrane protein</topology>
    </subcellularLocation>
    <subcellularLocation>
        <location evidence="1">Endoplasmic reticulum membrane</location>
        <topology evidence="2">Multi-pass membrane protein</topology>
    </subcellularLocation>
    <text evidence="1">Active at early endosome membrane in the biosynthesis of mature platelet-dense granules.</text>
</comment>
<comment type="similarity">
    <text evidence="5">Belongs to the TPT transporter family. SLC35D subfamily.</text>
</comment>
<protein>
    <recommendedName>
        <fullName evidence="6">Solute carrier family 35 member D3</fullName>
    </recommendedName>
    <alternativeName>
        <fullName evidence="6">Fringe connection-like protein 1</fullName>
    </alternativeName>
</protein>
<dbReference type="EMBL" id="AK295424">
    <property type="protein sequence ID" value="BAG58370.1"/>
    <property type="molecule type" value="mRNA"/>
</dbReference>
<dbReference type="EMBL" id="AL365223">
    <property type="status" value="NOT_ANNOTATED_CDS"/>
    <property type="molecule type" value="Genomic_DNA"/>
</dbReference>
<dbReference type="EMBL" id="CH471051">
    <property type="protein sequence ID" value="EAW47939.1"/>
    <property type="molecule type" value="Genomic_DNA"/>
</dbReference>
<dbReference type="EMBL" id="BC067217">
    <property type="protein sequence ID" value="AAH67217.1"/>
    <property type="molecule type" value="mRNA"/>
</dbReference>
<dbReference type="EMBL" id="BC087842">
    <property type="protein sequence ID" value="AAH87842.1"/>
    <property type="molecule type" value="mRNA"/>
</dbReference>
<dbReference type="CCDS" id="CCDS34544.1"/>
<dbReference type="RefSeq" id="NP_001008783.1">
    <property type="nucleotide sequence ID" value="NM_001008783.3"/>
</dbReference>
<dbReference type="SMR" id="Q5M8T2"/>
<dbReference type="BioGRID" id="131002">
    <property type="interactions" value="4"/>
</dbReference>
<dbReference type="FunCoup" id="Q5M8T2">
    <property type="interactions" value="451"/>
</dbReference>
<dbReference type="IntAct" id="Q5M8T2">
    <property type="interactions" value="2"/>
</dbReference>
<dbReference type="STRING" id="9606.ENSP00000333591"/>
<dbReference type="TCDB" id="2.A.7.15.5">
    <property type="family name" value="the drug/metabolite transporter (dmt) superfamily"/>
</dbReference>
<dbReference type="iPTMnet" id="Q5M8T2"/>
<dbReference type="PhosphoSitePlus" id="Q5M8T2"/>
<dbReference type="BioMuta" id="SLC35D3"/>
<dbReference type="DMDM" id="74736118"/>
<dbReference type="MassIVE" id="Q5M8T2"/>
<dbReference type="PaxDb" id="9606-ENSP00000333591"/>
<dbReference type="PeptideAtlas" id="Q5M8T2"/>
<dbReference type="ProteomicsDB" id="63567"/>
<dbReference type="Antibodypedia" id="33021">
    <property type="antibodies" value="63 antibodies from 24 providers"/>
</dbReference>
<dbReference type="DNASU" id="340146"/>
<dbReference type="Ensembl" id="ENST00000331858.5">
    <property type="protein sequence ID" value="ENSP00000333591.4"/>
    <property type="gene ID" value="ENSG00000182747.5"/>
</dbReference>
<dbReference type="GeneID" id="340146"/>
<dbReference type="KEGG" id="hsa:340146"/>
<dbReference type="MANE-Select" id="ENST00000331858.5">
    <property type="protein sequence ID" value="ENSP00000333591.4"/>
    <property type="RefSeq nucleotide sequence ID" value="NM_001008783.3"/>
    <property type="RefSeq protein sequence ID" value="NP_001008783.1"/>
</dbReference>
<dbReference type="UCSC" id="uc003qhe.4">
    <property type="organism name" value="human"/>
</dbReference>
<dbReference type="AGR" id="HGNC:15621"/>
<dbReference type="CTD" id="340146"/>
<dbReference type="DisGeNET" id="340146"/>
<dbReference type="GeneCards" id="SLC35D3"/>
<dbReference type="HGNC" id="HGNC:15621">
    <property type="gene designation" value="SLC35D3"/>
</dbReference>
<dbReference type="HPA" id="ENSG00000182747">
    <property type="expression patterns" value="Tissue enriched (brain)"/>
</dbReference>
<dbReference type="MIM" id="612519">
    <property type="type" value="gene"/>
</dbReference>
<dbReference type="neXtProt" id="NX_Q5M8T2"/>
<dbReference type="OpenTargets" id="ENSG00000182747"/>
<dbReference type="PharmGKB" id="PA134876893"/>
<dbReference type="VEuPathDB" id="HostDB:ENSG00000182747"/>
<dbReference type="eggNOG" id="KOG1444">
    <property type="taxonomic scope" value="Eukaryota"/>
</dbReference>
<dbReference type="GeneTree" id="ENSGT00940000160083"/>
<dbReference type="HOGENOM" id="CLU_040726_3_0_1"/>
<dbReference type="InParanoid" id="Q5M8T2"/>
<dbReference type="OMA" id="GWKDPTM"/>
<dbReference type="OrthoDB" id="417037at2759"/>
<dbReference type="PAN-GO" id="Q5M8T2">
    <property type="GO annotations" value="5 GO annotations based on evolutionary models"/>
</dbReference>
<dbReference type="PhylomeDB" id="Q5M8T2"/>
<dbReference type="TreeFam" id="TF313307"/>
<dbReference type="PathwayCommons" id="Q5M8T2"/>
<dbReference type="SignaLink" id="Q5M8T2"/>
<dbReference type="BioGRID-ORCS" id="340146">
    <property type="hits" value="11 hits in 1148 CRISPR screens"/>
</dbReference>
<dbReference type="GenomeRNAi" id="340146"/>
<dbReference type="Pharos" id="Q5M8T2">
    <property type="development level" value="Tbio"/>
</dbReference>
<dbReference type="PRO" id="PR:Q5M8T2"/>
<dbReference type="Proteomes" id="UP000005640">
    <property type="component" value="Chromosome 6"/>
</dbReference>
<dbReference type="RNAct" id="Q5M8T2">
    <property type="molecule type" value="protein"/>
</dbReference>
<dbReference type="Bgee" id="ENSG00000182747">
    <property type="expression patterns" value="Expressed in lateral nuclear group of thalamus and 43 other cell types or tissues"/>
</dbReference>
<dbReference type="GO" id="GO:0031901">
    <property type="term" value="C:early endosome membrane"/>
    <property type="evidence" value="ECO:0000250"/>
    <property type="project" value="UniProtKB"/>
</dbReference>
<dbReference type="GO" id="GO:0005783">
    <property type="term" value="C:endoplasmic reticulum"/>
    <property type="evidence" value="ECO:0000250"/>
    <property type="project" value="UniProtKB"/>
</dbReference>
<dbReference type="GO" id="GO:0005789">
    <property type="term" value="C:endoplasmic reticulum membrane"/>
    <property type="evidence" value="ECO:0007669"/>
    <property type="project" value="UniProtKB-SubCell"/>
</dbReference>
<dbReference type="GO" id="GO:0005794">
    <property type="term" value="C:Golgi apparatus"/>
    <property type="evidence" value="ECO:0000318"/>
    <property type="project" value="GO_Central"/>
</dbReference>
<dbReference type="GO" id="GO:0030672">
    <property type="term" value="C:synaptic vesicle membrane"/>
    <property type="evidence" value="ECO:0000314"/>
    <property type="project" value="UniProtKB"/>
</dbReference>
<dbReference type="GO" id="GO:0015297">
    <property type="term" value="F:antiporter activity"/>
    <property type="evidence" value="ECO:0000318"/>
    <property type="project" value="GO_Central"/>
</dbReference>
<dbReference type="GO" id="GO:0030674">
    <property type="term" value="F:protein-macromolecule adaptor activity"/>
    <property type="evidence" value="ECO:0000250"/>
    <property type="project" value="UniProtKB"/>
</dbReference>
<dbReference type="GO" id="GO:0005460">
    <property type="term" value="F:UDP-glucose transmembrane transporter activity"/>
    <property type="evidence" value="ECO:0000314"/>
    <property type="project" value="UniProtKB"/>
</dbReference>
<dbReference type="GO" id="GO:0097009">
    <property type="term" value="P:energy homeostasis"/>
    <property type="evidence" value="ECO:0007669"/>
    <property type="project" value="Ensembl"/>
</dbReference>
<dbReference type="GO" id="GO:0060155">
    <property type="term" value="P:platelet dense granule organization"/>
    <property type="evidence" value="ECO:0000250"/>
    <property type="project" value="UniProtKB"/>
</dbReference>
<dbReference type="GO" id="GO:0010508">
    <property type="term" value="P:positive regulation of autophagy"/>
    <property type="evidence" value="ECO:0000250"/>
    <property type="project" value="UniProtKB"/>
</dbReference>
<dbReference type="GO" id="GO:0070863">
    <property type="term" value="P:positive regulation of protein exit from endoplasmic reticulum"/>
    <property type="evidence" value="ECO:0007669"/>
    <property type="project" value="Ensembl"/>
</dbReference>
<dbReference type="GO" id="GO:0032527">
    <property type="term" value="P:protein exit from endoplasmic reticulum"/>
    <property type="evidence" value="ECO:0007669"/>
    <property type="project" value="Ensembl"/>
</dbReference>
<dbReference type="GO" id="GO:0055085">
    <property type="term" value="P:transmembrane transport"/>
    <property type="evidence" value="ECO:0000318"/>
    <property type="project" value="GO_Central"/>
</dbReference>
<dbReference type="GO" id="GO:0015786">
    <property type="term" value="P:UDP-glucose transmembrane transport"/>
    <property type="evidence" value="ECO:0000314"/>
    <property type="project" value="UniProtKB"/>
</dbReference>
<dbReference type="InterPro" id="IPR050186">
    <property type="entry name" value="TPT_transporter"/>
</dbReference>
<dbReference type="PANTHER" id="PTHR11132">
    <property type="entry name" value="SOLUTE CARRIER FAMILY 35"/>
    <property type="match status" value="1"/>
</dbReference>
<evidence type="ECO:0000250" key="1">
    <source>
        <dbReference type="UniProtKB" id="Q8BGF8"/>
    </source>
</evidence>
<evidence type="ECO:0000255" key="2"/>
<evidence type="ECO:0000256" key="3">
    <source>
        <dbReference type="SAM" id="MobiDB-lite"/>
    </source>
</evidence>
<evidence type="ECO:0000269" key="4">
    <source>
    </source>
</evidence>
<evidence type="ECO:0000305" key="5"/>
<evidence type="ECO:0000312" key="6">
    <source>
        <dbReference type="HGNC" id="HGNC:15621"/>
    </source>
</evidence>
<sequence>MRQLCRGRVLGISVAIAHGVFSGSLNILLKFLISRYQFSFLTLVQCLTSSTAALSLELLRRLGLIAVPPFGLSLARSFAGVAVLSTLQSSLTLWSLRGLSLPMYVVFKRCLPLVTMLIGVLVLKNGAPSPGVLAAVLITTCGAALAGAGDLTGDPIGYVTGVLAVLVHAAYLVLIQKASADTEHGPLTAQYVIAVSATPLLVICSFASTDSIHAWTFPGWKDPAMVCIFVACILIGCAMNFTTLHCTYINSAVTTSFVGVVKSIATITVGMVAFSDVEPTSLFIAGVVVNTLGSIIYCVAKFMETRKQSNYEDLEAQPRGEEAQLSGDQLPFVMEELPGEGGNGRSEGGEAAGGPAQESRQEVRGSPRGVPLVAGSSEEGSRRSLKDAYLEVWRLVRGTRYMKKDYLIENEELPSP</sequence>
<feature type="chain" id="PRO_0000307727" description="Solute carrier family 35 member D3">
    <location>
        <begin position="1"/>
        <end position="416"/>
    </location>
</feature>
<feature type="transmembrane region" description="Helical" evidence="2">
    <location>
        <begin position="9"/>
        <end position="29"/>
    </location>
</feature>
<feature type="transmembrane region" description="Helical" evidence="2">
    <location>
        <begin position="38"/>
        <end position="58"/>
    </location>
</feature>
<feature type="transmembrane region" description="Helical" evidence="2">
    <location>
        <begin position="64"/>
        <end position="84"/>
    </location>
</feature>
<feature type="transmembrane region" description="Helical" evidence="2">
    <location>
        <begin position="103"/>
        <end position="123"/>
    </location>
</feature>
<feature type="transmembrane region" description="Helical" evidence="2">
    <location>
        <begin position="131"/>
        <end position="151"/>
    </location>
</feature>
<feature type="transmembrane region" description="Helical" evidence="2">
    <location>
        <begin position="155"/>
        <end position="175"/>
    </location>
</feature>
<feature type="transmembrane region" description="Helical" evidence="2">
    <location>
        <begin position="187"/>
        <end position="207"/>
    </location>
</feature>
<feature type="transmembrane region" description="Helical" evidence="2">
    <location>
        <begin position="224"/>
        <end position="244"/>
    </location>
</feature>
<feature type="transmembrane region" description="Helical" evidence="2">
    <location>
        <begin position="257"/>
        <end position="277"/>
    </location>
</feature>
<feature type="transmembrane region" description="Helical" evidence="2">
    <location>
        <begin position="280"/>
        <end position="300"/>
    </location>
</feature>
<feature type="region of interest" description="Disordered" evidence="3">
    <location>
        <begin position="334"/>
        <end position="384"/>
    </location>
</feature>
<feature type="compositionally biased region" description="Gly residues" evidence="3">
    <location>
        <begin position="339"/>
        <end position="352"/>
    </location>
</feature>
<gene>
    <name evidence="6" type="primary">SLC35D3</name>
    <name evidence="6" type="synonym">FRCL1</name>
</gene>
<organism>
    <name type="scientific">Homo sapiens</name>
    <name type="common">Human</name>
    <dbReference type="NCBI Taxonomy" id="9606"/>
    <lineage>
        <taxon>Eukaryota</taxon>
        <taxon>Metazoa</taxon>
        <taxon>Chordata</taxon>
        <taxon>Craniata</taxon>
        <taxon>Vertebrata</taxon>
        <taxon>Euteleostomi</taxon>
        <taxon>Mammalia</taxon>
        <taxon>Eutheria</taxon>
        <taxon>Euarchontoglires</taxon>
        <taxon>Primates</taxon>
        <taxon>Haplorrhini</taxon>
        <taxon>Catarrhini</taxon>
        <taxon>Hominidae</taxon>
        <taxon>Homo</taxon>
    </lineage>
</organism>
<reference key="1">
    <citation type="journal article" date="2004" name="Nat. Genet.">
        <title>Complete sequencing and characterization of 21,243 full-length human cDNAs.</title>
        <authorList>
            <person name="Ota T."/>
            <person name="Suzuki Y."/>
            <person name="Nishikawa T."/>
            <person name="Otsuki T."/>
            <person name="Sugiyama T."/>
            <person name="Irie R."/>
            <person name="Wakamatsu A."/>
            <person name="Hayashi K."/>
            <person name="Sato H."/>
            <person name="Nagai K."/>
            <person name="Kimura K."/>
            <person name="Makita H."/>
            <person name="Sekine M."/>
            <person name="Obayashi M."/>
            <person name="Nishi T."/>
            <person name="Shibahara T."/>
            <person name="Tanaka T."/>
            <person name="Ishii S."/>
            <person name="Yamamoto J."/>
            <person name="Saito K."/>
            <person name="Kawai Y."/>
            <person name="Isono Y."/>
            <person name="Nakamura Y."/>
            <person name="Nagahari K."/>
            <person name="Murakami K."/>
            <person name="Yasuda T."/>
            <person name="Iwayanagi T."/>
            <person name="Wagatsuma M."/>
            <person name="Shiratori A."/>
            <person name="Sudo H."/>
            <person name="Hosoiri T."/>
            <person name="Kaku Y."/>
            <person name="Kodaira H."/>
            <person name="Kondo H."/>
            <person name="Sugawara M."/>
            <person name="Takahashi M."/>
            <person name="Kanda K."/>
            <person name="Yokoi T."/>
            <person name="Furuya T."/>
            <person name="Kikkawa E."/>
            <person name="Omura Y."/>
            <person name="Abe K."/>
            <person name="Kamihara K."/>
            <person name="Katsuta N."/>
            <person name="Sato K."/>
            <person name="Tanikawa M."/>
            <person name="Yamazaki M."/>
            <person name="Ninomiya K."/>
            <person name="Ishibashi T."/>
            <person name="Yamashita H."/>
            <person name="Murakawa K."/>
            <person name="Fujimori K."/>
            <person name="Tanai H."/>
            <person name="Kimata M."/>
            <person name="Watanabe M."/>
            <person name="Hiraoka S."/>
            <person name="Chiba Y."/>
            <person name="Ishida S."/>
            <person name="Ono Y."/>
            <person name="Takiguchi S."/>
            <person name="Watanabe S."/>
            <person name="Yosida M."/>
            <person name="Hotuta T."/>
            <person name="Kusano J."/>
            <person name="Kanehori K."/>
            <person name="Takahashi-Fujii A."/>
            <person name="Hara H."/>
            <person name="Tanase T.-O."/>
            <person name="Nomura Y."/>
            <person name="Togiya S."/>
            <person name="Komai F."/>
            <person name="Hara R."/>
            <person name="Takeuchi K."/>
            <person name="Arita M."/>
            <person name="Imose N."/>
            <person name="Musashino K."/>
            <person name="Yuuki H."/>
            <person name="Oshima A."/>
            <person name="Sasaki N."/>
            <person name="Aotsuka S."/>
            <person name="Yoshikawa Y."/>
            <person name="Matsunawa H."/>
            <person name="Ichihara T."/>
            <person name="Shiohata N."/>
            <person name="Sano S."/>
            <person name="Moriya S."/>
            <person name="Momiyama H."/>
            <person name="Satoh N."/>
            <person name="Takami S."/>
            <person name="Terashima Y."/>
            <person name="Suzuki O."/>
            <person name="Nakagawa S."/>
            <person name="Senoh A."/>
            <person name="Mizoguchi H."/>
            <person name="Goto Y."/>
            <person name="Shimizu F."/>
            <person name="Wakebe H."/>
            <person name="Hishigaki H."/>
            <person name="Watanabe T."/>
            <person name="Sugiyama A."/>
            <person name="Takemoto M."/>
            <person name="Kawakami B."/>
            <person name="Yamazaki M."/>
            <person name="Watanabe K."/>
            <person name="Kumagai A."/>
            <person name="Itakura S."/>
            <person name="Fukuzumi Y."/>
            <person name="Fujimori Y."/>
            <person name="Komiyama M."/>
            <person name="Tashiro H."/>
            <person name="Tanigami A."/>
            <person name="Fujiwara T."/>
            <person name="Ono T."/>
            <person name="Yamada K."/>
            <person name="Fujii Y."/>
            <person name="Ozaki K."/>
            <person name="Hirao M."/>
            <person name="Ohmori Y."/>
            <person name="Kawabata A."/>
            <person name="Hikiji T."/>
            <person name="Kobatake N."/>
            <person name="Inagaki H."/>
            <person name="Ikema Y."/>
            <person name="Okamoto S."/>
            <person name="Okitani R."/>
            <person name="Kawakami T."/>
            <person name="Noguchi S."/>
            <person name="Itoh T."/>
            <person name="Shigeta K."/>
            <person name="Senba T."/>
            <person name="Matsumura K."/>
            <person name="Nakajima Y."/>
            <person name="Mizuno T."/>
            <person name="Morinaga M."/>
            <person name="Sasaki M."/>
            <person name="Togashi T."/>
            <person name="Oyama M."/>
            <person name="Hata H."/>
            <person name="Watanabe M."/>
            <person name="Komatsu T."/>
            <person name="Mizushima-Sugano J."/>
            <person name="Satoh T."/>
            <person name="Shirai Y."/>
            <person name="Takahashi Y."/>
            <person name="Nakagawa K."/>
            <person name="Okumura K."/>
            <person name="Nagase T."/>
            <person name="Nomura N."/>
            <person name="Kikuchi H."/>
            <person name="Masuho Y."/>
            <person name="Yamashita R."/>
            <person name="Nakai K."/>
            <person name="Yada T."/>
            <person name="Nakamura Y."/>
            <person name="Ohara O."/>
            <person name="Isogai T."/>
            <person name="Sugano S."/>
        </authorList>
    </citation>
    <scope>NUCLEOTIDE SEQUENCE [LARGE SCALE MRNA]</scope>
    <source>
        <tissue>Corpus callosum</tissue>
    </source>
</reference>
<reference key="2">
    <citation type="journal article" date="2003" name="Nature">
        <title>The DNA sequence and analysis of human chromosome 6.</title>
        <authorList>
            <person name="Mungall A.J."/>
            <person name="Palmer S.A."/>
            <person name="Sims S.K."/>
            <person name="Edwards C.A."/>
            <person name="Ashurst J.L."/>
            <person name="Wilming L."/>
            <person name="Jones M.C."/>
            <person name="Horton R."/>
            <person name="Hunt S.E."/>
            <person name="Scott C.E."/>
            <person name="Gilbert J.G.R."/>
            <person name="Clamp M.E."/>
            <person name="Bethel G."/>
            <person name="Milne S."/>
            <person name="Ainscough R."/>
            <person name="Almeida J.P."/>
            <person name="Ambrose K.D."/>
            <person name="Andrews T.D."/>
            <person name="Ashwell R.I.S."/>
            <person name="Babbage A.K."/>
            <person name="Bagguley C.L."/>
            <person name="Bailey J."/>
            <person name="Banerjee R."/>
            <person name="Barker D.J."/>
            <person name="Barlow K.F."/>
            <person name="Bates K."/>
            <person name="Beare D.M."/>
            <person name="Beasley H."/>
            <person name="Beasley O."/>
            <person name="Bird C.P."/>
            <person name="Blakey S.E."/>
            <person name="Bray-Allen S."/>
            <person name="Brook J."/>
            <person name="Brown A.J."/>
            <person name="Brown J.Y."/>
            <person name="Burford D.C."/>
            <person name="Burrill W."/>
            <person name="Burton J."/>
            <person name="Carder C."/>
            <person name="Carter N.P."/>
            <person name="Chapman J.C."/>
            <person name="Clark S.Y."/>
            <person name="Clark G."/>
            <person name="Clee C.M."/>
            <person name="Clegg S."/>
            <person name="Cobley V."/>
            <person name="Collier R.E."/>
            <person name="Collins J.E."/>
            <person name="Colman L.K."/>
            <person name="Corby N.R."/>
            <person name="Coville G.J."/>
            <person name="Culley K.M."/>
            <person name="Dhami P."/>
            <person name="Davies J."/>
            <person name="Dunn M."/>
            <person name="Earthrowl M.E."/>
            <person name="Ellington A.E."/>
            <person name="Evans K.A."/>
            <person name="Faulkner L."/>
            <person name="Francis M.D."/>
            <person name="Frankish A."/>
            <person name="Frankland J."/>
            <person name="French L."/>
            <person name="Garner P."/>
            <person name="Garnett J."/>
            <person name="Ghori M.J."/>
            <person name="Gilby L.M."/>
            <person name="Gillson C.J."/>
            <person name="Glithero R.J."/>
            <person name="Grafham D.V."/>
            <person name="Grant M."/>
            <person name="Gribble S."/>
            <person name="Griffiths C."/>
            <person name="Griffiths M.N.D."/>
            <person name="Hall R."/>
            <person name="Halls K.S."/>
            <person name="Hammond S."/>
            <person name="Harley J.L."/>
            <person name="Hart E.A."/>
            <person name="Heath P.D."/>
            <person name="Heathcott R."/>
            <person name="Holmes S.J."/>
            <person name="Howden P.J."/>
            <person name="Howe K.L."/>
            <person name="Howell G.R."/>
            <person name="Huckle E."/>
            <person name="Humphray S.J."/>
            <person name="Humphries M.D."/>
            <person name="Hunt A.R."/>
            <person name="Johnson C.M."/>
            <person name="Joy A.A."/>
            <person name="Kay M."/>
            <person name="Keenan S.J."/>
            <person name="Kimberley A.M."/>
            <person name="King A."/>
            <person name="Laird G.K."/>
            <person name="Langford C."/>
            <person name="Lawlor S."/>
            <person name="Leongamornlert D.A."/>
            <person name="Leversha M."/>
            <person name="Lloyd C.R."/>
            <person name="Lloyd D.M."/>
            <person name="Loveland J.E."/>
            <person name="Lovell J."/>
            <person name="Martin S."/>
            <person name="Mashreghi-Mohammadi M."/>
            <person name="Maslen G.L."/>
            <person name="Matthews L."/>
            <person name="McCann O.T."/>
            <person name="McLaren S.J."/>
            <person name="McLay K."/>
            <person name="McMurray A."/>
            <person name="Moore M.J.F."/>
            <person name="Mullikin J.C."/>
            <person name="Niblett D."/>
            <person name="Nickerson T."/>
            <person name="Novik K.L."/>
            <person name="Oliver K."/>
            <person name="Overton-Larty E.K."/>
            <person name="Parker A."/>
            <person name="Patel R."/>
            <person name="Pearce A.V."/>
            <person name="Peck A.I."/>
            <person name="Phillimore B.J.C.T."/>
            <person name="Phillips S."/>
            <person name="Plumb R.W."/>
            <person name="Porter K.M."/>
            <person name="Ramsey Y."/>
            <person name="Ranby S.A."/>
            <person name="Rice C.M."/>
            <person name="Ross M.T."/>
            <person name="Searle S.M."/>
            <person name="Sehra H.K."/>
            <person name="Sheridan E."/>
            <person name="Skuce C.D."/>
            <person name="Smith S."/>
            <person name="Smith M."/>
            <person name="Spraggon L."/>
            <person name="Squares S.L."/>
            <person name="Steward C.A."/>
            <person name="Sycamore N."/>
            <person name="Tamlyn-Hall G."/>
            <person name="Tester J."/>
            <person name="Theaker A.J."/>
            <person name="Thomas D.W."/>
            <person name="Thorpe A."/>
            <person name="Tracey A."/>
            <person name="Tromans A."/>
            <person name="Tubby B."/>
            <person name="Wall M."/>
            <person name="Wallis J.M."/>
            <person name="West A.P."/>
            <person name="White S.S."/>
            <person name="Whitehead S.L."/>
            <person name="Whittaker H."/>
            <person name="Wild A."/>
            <person name="Willey D.J."/>
            <person name="Wilmer T.E."/>
            <person name="Wood J.M."/>
            <person name="Wray P.W."/>
            <person name="Wyatt J.C."/>
            <person name="Young L."/>
            <person name="Younger R.M."/>
            <person name="Bentley D.R."/>
            <person name="Coulson A."/>
            <person name="Durbin R.M."/>
            <person name="Hubbard T."/>
            <person name="Sulston J.E."/>
            <person name="Dunham I."/>
            <person name="Rogers J."/>
            <person name="Beck S."/>
        </authorList>
    </citation>
    <scope>NUCLEOTIDE SEQUENCE [LARGE SCALE GENOMIC DNA]</scope>
</reference>
<reference key="3">
    <citation type="submission" date="2005-09" db="EMBL/GenBank/DDBJ databases">
        <authorList>
            <person name="Mural R.J."/>
            <person name="Istrail S."/>
            <person name="Sutton G.G."/>
            <person name="Florea L."/>
            <person name="Halpern A.L."/>
            <person name="Mobarry C.M."/>
            <person name="Lippert R."/>
            <person name="Walenz B."/>
            <person name="Shatkay H."/>
            <person name="Dew I."/>
            <person name="Miller J.R."/>
            <person name="Flanigan M.J."/>
            <person name="Edwards N.J."/>
            <person name="Bolanos R."/>
            <person name="Fasulo D."/>
            <person name="Halldorsson B.V."/>
            <person name="Hannenhalli S."/>
            <person name="Turner R."/>
            <person name="Yooseph S."/>
            <person name="Lu F."/>
            <person name="Nusskern D.R."/>
            <person name="Shue B.C."/>
            <person name="Zheng X.H."/>
            <person name="Zhong F."/>
            <person name="Delcher A.L."/>
            <person name="Huson D.H."/>
            <person name="Kravitz S.A."/>
            <person name="Mouchard L."/>
            <person name="Reinert K."/>
            <person name="Remington K.A."/>
            <person name="Clark A.G."/>
            <person name="Waterman M.S."/>
            <person name="Eichler E.E."/>
            <person name="Adams M.D."/>
            <person name="Hunkapiller M.W."/>
            <person name="Myers E.W."/>
            <person name="Venter J.C."/>
        </authorList>
    </citation>
    <scope>NUCLEOTIDE SEQUENCE [LARGE SCALE GENOMIC DNA]</scope>
</reference>
<reference key="4">
    <citation type="journal article" date="2004" name="Genome Res.">
        <title>The status, quality, and expansion of the NIH full-length cDNA project: the Mammalian Gene Collection (MGC).</title>
        <authorList>
            <consortium name="The MGC Project Team"/>
        </authorList>
    </citation>
    <scope>NUCLEOTIDE SEQUENCE [LARGE SCALE MRNA]</scope>
    <source>
        <tissue>PNS</tissue>
    </source>
</reference>
<reference key="5">
    <citation type="journal article" date="2021" name="Elife">
        <title>Localization, proteomics, and metabolite profiling reveal a putative vesicular transporter for UDP-glucose.</title>
        <authorList>
            <person name="Qian C."/>
            <person name="Wu Z."/>
            <person name="Sun R."/>
            <person name="Yu H."/>
            <person name="Zeng J."/>
            <person name="Rao Y."/>
            <person name="Li Y."/>
        </authorList>
    </citation>
    <scope>FUNCTION</scope>
    <scope>TRANSPORTER ACTIVITY</scope>
    <scope>BIOPHYSICOCHEMICAL PROPERTIES</scope>
    <scope>ACTIVITY REGULATION</scope>
    <scope>SUBCELLULAR LOCATION</scope>
</reference>
<proteinExistence type="evidence at protein level"/>
<name>S35D3_HUMAN</name>
<keyword id="KW-0968">Cytoplasmic vesicle</keyword>
<keyword id="KW-0256">Endoplasmic reticulum</keyword>
<keyword id="KW-0967">Endosome</keyword>
<keyword id="KW-0472">Membrane</keyword>
<keyword id="KW-1267">Proteomics identification</keyword>
<keyword id="KW-1185">Reference proteome</keyword>
<keyword id="KW-0762">Sugar transport</keyword>
<keyword id="KW-0770">Synapse</keyword>
<keyword id="KW-0812">Transmembrane</keyword>
<keyword id="KW-1133">Transmembrane helix</keyword>
<keyword id="KW-0813">Transport</keyword>
<accession>Q5M8T2</accession>
<accession>B4DI58</accession>
<accession>Q5QNZ6</accession>
<accession>Q6NX71</accession>